<feature type="chain" id="PRO_1000201042" description="Fatty acid metabolism regulator protein">
    <location>
        <begin position="1"/>
        <end position="239"/>
    </location>
</feature>
<feature type="domain" description="HTH gntR-type" evidence="1">
    <location>
        <begin position="6"/>
        <end position="74"/>
    </location>
</feature>
<feature type="DNA-binding region" description="H-T-H motif" evidence="1">
    <location>
        <begin position="34"/>
        <end position="53"/>
    </location>
</feature>
<comment type="function">
    <text evidence="1">Multifunctional regulator of fatty acid metabolism.</text>
</comment>
<comment type="subunit">
    <text evidence="1">Homodimer.</text>
</comment>
<comment type="subcellular location">
    <subcellularLocation>
        <location evidence="1">Cytoplasm</location>
    </subcellularLocation>
</comment>
<evidence type="ECO:0000255" key="1">
    <source>
        <dbReference type="HAMAP-Rule" id="MF_00696"/>
    </source>
</evidence>
<accession>B7LGU7</accession>
<gene>
    <name evidence="1" type="primary">fadR</name>
    <name type="ordered locus">EC55989_1282</name>
</gene>
<organism>
    <name type="scientific">Escherichia coli (strain 55989 / EAEC)</name>
    <dbReference type="NCBI Taxonomy" id="585055"/>
    <lineage>
        <taxon>Bacteria</taxon>
        <taxon>Pseudomonadati</taxon>
        <taxon>Pseudomonadota</taxon>
        <taxon>Gammaproteobacteria</taxon>
        <taxon>Enterobacterales</taxon>
        <taxon>Enterobacteriaceae</taxon>
        <taxon>Escherichia</taxon>
    </lineage>
</organism>
<name>FADR_ECO55</name>
<protein>
    <recommendedName>
        <fullName evidence="1">Fatty acid metabolism regulator protein</fullName>
    </recommendedName>
</protein>
<sequence length="239" mass="26969">MVIKAQSPAGFAEEYIIESIWNNRFPPGTILPAERELSELIGVTRTTLREVLQRLARDGWLTIQHGKPTKVNNFWETSGLNILETLARLDHESVPQLIDNLLSVRTNISTIFIRTAFRQHPDKAQEVLATANEVADHADAFAELDYNIFRGLAFASGNPIYGLILNGMKGLYTRIGRHYFANPEARSLALGFYHKLSALCSEGAHDQVYETVRRYGHESGEIWHRMQKNLPGDLAIQGR</sequence>
<reference key="1">
    <citation type="journal article" date="2009" name="PLoS Genet.">
        <title>Organised genome dynamics in the Escherichia coli species results in highly diverse adaptive paths.</title>
        <authorList>
            <person name="Touchon M."/>
            <person name="Hoede C."/>
            <person name="Tenaillon O."/>
            <person name="Barbe V."/>
            <person name="Baeriswyl S."/>
            <person name="Bidet P."/>
            <person name="Bingen E."/>
            <person name="Bonacorsi S."/>
            <person name="Bouchier C."/>
            <person name="Bouvet O."/>
            <person name="Calteau A."/>
            <person name="Chiapello H."/>
            <person name="Clermont O."/>
            <person name="Cruveiller S."/>
            <person name="Danchin A."/>
            <person name="Diard M."/>
            <person name="Dossat C."/>
            <person name="Karoui M.E."/>
            <person name="Frapy E."/>
            <person name="Garry L."/>
            <person name="Ghigo J.M."/>
            <person name="Gilles A.M."/>
            <person name="Johnson J."/>
            <person name="Le Bouguenec C."/>
            <person name="Lescat M."/>
            <person name="Mangenot S."/>
            <person name="Martinez-Jehanne V."/>
            <person name="Matic I."/>
            <person name="Nassif X."/>
            <person name="Oztas S."/>
            <person name="Petit M.A."/>
            <person name="Pichon C."/>
            <person name="Rouy Z."/>
            <person name="Ruf C.S."/>
            <person name="Schneider D."/>
            <person name="Tourret J."/>
            <person name="Vacherie B."/>
            <person name="Vallenet D."/>
            <person name="Medigue C."/>
            <person name="Rocha E.P.C."/>
            <person name="Denamur E."/>
        </authorList>
    </citation>
    <scope>NUCLEOTIDE SEQUENCE [LARGE SCALE GENOMIC DNA]</scope>
    <source>
        <strain>55989 / EAEC</strain>
    </source>
</reference>
<proteinExistence type="inferred from homology"/>
<keyword id="KW-0010">Activator</keyword>
<keyword id="KW-0963">Cytoplasm</keyword>
<keyword id="KW-0238">DNA-binding</keyword>
<keyword id="KW-0276">Fatty acid metabolism</keyword>
<keyword id="KW-0443">Lipid metabolism</keyword>
<keyword id="KW-1185">Reference proteome</keyword>
<keyword id="KW-0678">Repressor</keyword>
<keyword id="KW-0804">Transcription</keyword>
<keyword id="KW-0805">Transcription regulation</keyword>
<dbReference type="EMBL" id="CU928145">
    <property type="protein sequence ID" value="CAU97141.1"/>
    <property type="molecule type" value="Genomic_DNA"/>
</dbReference>
<dbReference type="RefSeq" id="WP_000234823.1">
    <property type="nucleotide sequence ID" value="NZ_CP028304.1"/>
</dbReference>
<dbReference type="SMR" id="B7LGU7"/>
<dbReference type="GeneID" id="93776245"/>
<dbReference type="KEGG" id="eck:EC55989_1282"/>
<dbReference type="HOGENOM" id="CLU_017584_9_4_6"/>
<dbReference type="Proteomes" id="UP000000746">
    <property type="component" value="Chromosome"/>
</dbReference>
<dbReference type="GO" id="GO:0005737">
    <property type="term" value="C:cytoplasm"/>
    <property type="evidence" value="ECO:0007669"/>
    <property type="project" value="UniProtKB-SubCell"/>
</dbReference>
<dbReference type="GO" id="GO:0003677">
    <property type="term" value="F:DNA binding"/>
    <property type="evidence" value="ECO:0007669"/>
    <property type="project" value="UniProtKB-KW"/>
</dbReference>
<dbReference type="GO" id="GO:0003700">
    <property type="term" value="F:DNA-binding transcription factor activity"/>
    <property type="evidence" value="ECO:0007669"/>
    <property type="project" value="UniProtKB-UniRule"/>
</dbReference>
<dbReference type="GO" id="GO:0000062">
    <property type="term" value="F:fatty-acyl-CoA binding"/>
    <property type="evidence" value="ECO:0007669"/>
    <property type="project" value="InterPro"/>
</dbReference>
<dbReference type="GO" id="GO:0006631">
    <property type="term" value="P:fatty acid metabolic process"/>
    <property type="evidence" value="ECO:0007669"/>
    <property type="project" value="UniProtKB-KW"/>
</dbReference>
<dbReference type="GO" id="GO:0019217">
    <property type="term" value="P:regulation of fatty acid metabolic process"/>
    <property type="evidence" value="ECO:0007669"/>
    <property type="project" value="UniProtKB-UniRule"/>
</dbReference>
<dbReference type="CDD" id="cd07377">
    <property type="entry name" value="WHTH_GntR"/>
    <property type="match status" value="1"/>
</dbReference>
<dbReference type="FunFam" id="1.10.10.10:FF:000036">
    <property type="entry name" value="Fatty acid metabolism regulator protein"/>
    <property type="match status" value="1"/>
</dbReference>
<dbReference type="FunFam" id="1.20.120.530:FF:000003">
    <property type="entry name" value="Fatty acid metabolism regulator protein"/>
    <property type="match status" value="1"/>
</dbReference>
<dbReference type="Gene3D" id="1.20.120.530">
    <property type="entry name" value="GntR ligand-binding domain-like"/>
    <property type="match status" value="1"/>
</dbReference>
<dbReference type="Gene3D" id="1.10.10.10">
    <property type="entry name" value="Winged helix-like DNA-binding domain superfamily/Winged helix DNA-binding domain"/>
    <property type="match status" value="1"/>
</dbReference>
<dbReference type="HAMAP" id="MF_00696">
    <property type="entry name" value="HTH_FadR"/>
    <property type="match status" value="1"/>
</dbReference>
<dbReference type="InterPro" id="IPR014178">
    <property type="entry name" value="FA-response_TF_FadR"/>
</dbReference>
<dbReference type="InterPro" id="IPR028374">
    <property type="entry name" value="FadR_C"/>
</dbReference>
<dbReference type="InterPro" id="IPR008920">
    <property type="entry name" value="TF_FadR/GntR_C"/>
</dbReference>
<dbReference type="InterPro" id="IPR000524">
    <property type="entry name" value="Tscrpt_reg_HTH_GntR"/>
</dbReference>
<dbReference type="InterPro" id="IPR036388">
    <property type="entry name" value="WH-like_DNA-bd_sf"/>
</dbReference>
<dbReference type="InterPro" id="IPR036390">
    <property type="entry name" value="WH_DNA-bd_sf"/>
</dbReference>
<dbReference type="NCBIfam" id="TIGR02812">
    <property type="entry name" value="fadR_gamma"/>
    <property type="match status" value="1"/>
</dbReference>
<dbReference type="NCBIfam" id="NF003444">
    <property type="entry name" value="PRK04984.1"/>
    <property type="match status" value="1"/>
</dbReference>
<dbReference type="PANTHER" id="PTHR43537:SF52">
    <property type="entry name" value="FATTY ACID METABOLISM REGULATOR PROTEIN"/>
    <property type="match status" value="1"/>
</dbReference>
<dbReference type="PANTHER" id="PTHR43537">
    <property type="entry name" value="TRANSCRIPTIONAL REGULATOR, GNTR FAMILY"/>
    <property type="match status" value="1"/>
</dbReference>
<dbReference type="Pfam" id="PF07840">
    <property type="entry name" value="FadR_C"/>
    <property type="match status" value="1"/>
</dbReference>
<dbReference type="Pfam" id="PF00392">
    <property type="entry name" value="GntR"/>
    <property type="match status" value="1"/>
</dbReference>
<dbReference type="PRINTS" id="PR00035">
    <property type="entry name" value="HTHGNTR"/>
</dbReference>
<dbReference type="SMART" id="SM00345">
    <property type="entry name" value="HTH_GNTR"/>
    <property type="match status" value="1"/>
</dbReference>
<dbReference type="SUPFAM" id="SSF48008">
    <property type="entry name" value="GntR ligand-binding domain-like"/>
    <property type="match status" value="1"/>
</dbReference>
<dbReference type="SUPFAM" id="SSF46785">
    <property type="entry name" value="Winged helix' DNA-binding domain"/>
    <property type="match status" value="1"/>
</dbReference>
<dbReference type="PROSITE" id="PS50949">
    <property type="entry name" value="HTH_GNTR"/>
    <property type="match status" value="1"/>
</dbReference>